<dbReference type="EC" id="2.7.2.8" evidence="1"/>
<dbReference type="EMBL" id="CP000127">
    <property type="protein sequence ID" value="ABA59437.1"/>
    <property type="molecule type" value="Genomic_DNA"/>
</dbReference>
<dbReference type="RefSeq" id="WP_011331121.1">
    <property type="nucleotide sequence ID" value="NC_007484.1"/>
</dbReference>
<dbReference type="SMR" id="Q3J6V9"/>
<dbReference type="FunCoup" id="Q3J6V9">
    <property type="interactions" value="351"/>
</dbReference>
<dbReference type="STRING" id="323261.Noc_2995"/>
<dbReference type="KEGG" id="noc:Noc_2995"/>
<dbReference type="eggNOG" id="COG0548">
    <property type="taxonomic scope" value="Bacteria"/>
</dbReference>
<dbReference type="HOGENOM" id="CLU_053680_0_0_6"/>
<dbReference type="InParanoid" id="Q3J6V9"/>
<dbReference type="UniPathway" id="UPA00068">
    <property type="reaction ID" value="UER00107"/>
</dbReference>
<dbReference type="Proteomes" id="UP000006838">
    <property type="component" value="Chromosome"/>
</dbReference>
<dbReference type="GO" id="GO:0005737">
    <property type="term" value="C:cytoplasm"/>
    <property type="evidence" value="ECO:0007669"/>
    <property type="project" value="UniProtKB-SubCell"/>
</dbReference>
<dbReference type="GO" id="GO:0003991">
    <property type="term" value="F:acetylglutamate kinase activity"/>
    <property type="evidence" value="ECO:0007669"/>
    <property type="project" value="UniProtKB-UniRule"/>
</dbReference>
<dbReference type="GO" id="GO:0005524">
    <property type="term" value="F:ATP binding"/>
    <property type="evidence" value="ECO:0007669"/>
    <property type="project" value="UniProtKB-UniRule"/>
</dbReference>
<dbReference type="GO" id="GO:0042450">
    <property type="term" value="P:arginine biosynthetic process via ornithine"/>
    <property type="evidence" value="ECO:0007669"/>
    <property type="project" value="UniProtKB-UniRule"/>
</dbReference>
<dbReference type="GO" id="GO:0006526">
    <property type="term" value="P:L-arginine biosynthetic process"/>
    <property type="evidence" value="ECO:0007669"/>
    <property type="project" value="UniProtKB-UniPathway"/>
</dbReference>
<dbReference type="CDD" id="cd04250">
    <property type="entry name" value="AAK_NAGK-C"/>
    <property type="match status" value="1"/>
</dbReference>
<dbReference type="FunFam" id="3.40.1160.10:FF:000004">
    <property type="entry name" value="Acetylglutamate kinase"/>
    <property type="match status" value="1"/>
</dbReference>
<dbReference type="Gene3D" id="3.40.1160.10">
    <property type="entry name" value="Acetylglutamate kinase-like"/>
    <property type="match status" value="1"/>
</dbReference>
<dbReference type="HAMAP" id="MF_00082">
    <property type="entry name" value="ArgB"/>
    <property type="match status" value="1"/>
</dbReference>
<dbReference type="InterPro" id="IPR036393">
    <property type="entry name" value="AceGlu_kinase-like_sf"/>
</dbReference>
<dbReference type="InterPro" id="IPR004662">
    <property type="entry name" value="AcgluKinase_fam"/>
</dbReference>
<dbReference type="InterPro" id="IPR037528">
    <property type="entry name" value="ArgB"/>
</dbReference>
<dbReference type="InterPro" id="IPR001048">
    <property type="entry name" value="Asp/Glu/Uridylate_kinase"/>
</dbReference>
<dbReference type="InterPro" id="IPR001057">
    <property type="entry name" value="Glu/AcGlu_kinase"/>
</dbReference>
<dbReference type="InterPro" id="IPR041727">
    <property type="entry name" value="NAGK-C"/>
</dbReference>
<dbReference type="NCBIfam" id="TIGR00761">
    <property type="entry name" value="argB"/>
    <property type="match status" value="1"/>
</dbReference>
<dbReference type="PANTHER" id="PTHR23342">
    <property type="entry name" value="N-ACETYLGLUTAMATE SYNTHASE"/>
    <property type="match status" value="1"/>
</dbReference>
<dbReference type="PANTHER" id="PTHR23342:SF0">
    <property type="entry name" value="N-ACETYLGLUTAMATE SYNTHASE, MITOCHONDRIAL"/>
    <property type="match status" value="1"/>
</dbReference>
<dbReference type="Pfam" id="PF00696">
    <property type="entry name" value="AA_kinase"/>
    <property type="match status" value="1"/>
</dbReference>
<dbReference type="PIRSF" id="PIRSF000728">
    <property type="entry name" value="NAGK"/>
    <property type="match status" value="1"/>
</dbReference>
<dbReference type="PRINTS" id="PR00474">
    <property type="entry name" value="GLU5KINASE"/>
</dbReference>
<dbReference type="SUPFAM" id="SSF53633">
    <property type="entry name" value="Carbamate kinase-like"/>
    <property type="match status" value="1"/>
</dbReference>
<gene>
    <name evidence="1" type="primary">argB</name>
    <name type="ordered locus">Noc_2995</name>
</gene>
<name>ARGB_NITOC</name>
<proteinExistence type="inferred from homology"/>
<protein>
    <recommendedName>
        <fullName evidence="1">Acetylglutamate kinase</fullName>
        <ecNumber evidence="1">2.7.2.8</ecNumber>
    </recommendedName>
    <alternativeName>
        <fullName evidence="1">N-acetyl-L-glutamate 5-phosphotransferase</fullName>
    </alternativeName>
    <alternativeName>
        <fullName evidence="1">NAG kinase</fullName>
        <shortName evidence="1">NAGK</shortName>
    </alternativeName>
</protein>
<feature type="chain" id="PRO_0000264725" description="Acetylglutamate kinase">
    <location>
        <begin position="1"/>
        <end position="301"/>
    </location>
</feature>
<feature type="binding site" evidence="1">
    <location>
        <begin position="68"/>
        <end position="69"/>
    </location>
    <ligand>
        <name>substrate</name>
    </ligand>
</feature>
<feature type="binding site" evidence="1">
    <location>
        <position position="90"/>
    </location>
    <ligand>
        <name>substrate</name>
    </ligand>
</feature>
<feature type="binding site" evidence="1">
    <location>
        <position position="197"/>
    </location>
    <ligand>
        <name>substrate</name>
    </ligand>
</feature>
<feature type="site" description="Transition state stabilizer" evidence="1">
    <location>
        <position position="33"/>
    </location>
</feature>
<feature type="site" description="Transition state stabilizer" evidence="1">
    <location>
        <position position="257"/>
    </location>
</feature>
<evidence type="ECO:0000255" key="1">
    <source>
        <dbReference type="HAMAP-Rule" id="MF_00082"/>
    </source>
</evidence>
<organism>
    <name type="scientific">Nitrosococcus oceani (strain ATCC 19707 / BCRC 17464 / JCM 30415 / NCIMB 11848 / C-107)</name>
    <dbReference type="NCBI Taxonomy" id="323261"/>
    <lineage>
        <taxon>Bacteria</taxon>
        <taxon>Pseudomonadati</taxon>
        <taxon>Pseudomonadota</taxon>
        <taxon>Gammaproteobacteria</taxon>
        <taxon>Chromatiales</taxon>
        <taxon>Chromatiaceae</taxon>
        <taxon>Nitrosococcus</taxon>
    </lineage>
</organism>
<reference key="1">
    <citation type="journal article" date="2006" name="Appl. Environ. Microbiol.">
        <title>Complete genome sequence of the marine, chemolithoautotrophic, ammonia-oxidizing bacterium Nitrosococcus oceani ATCC 19707.</title>
        <authorList>
            <person name="Klotz M.G."/>
            <person name="Arp D.J."/>
            <person name="Chain P.S.G."/>
            <person name="El-Sheikh A.F."/>
            <person name="Hauser L.J."/>
            <person name="Hommes N.G."/>
            <person name="Larimer F.W."/>
            <person name="Malfatti S.A."/>
            <person name="Norton J.M."/>
            <person name="Poret-Peterson A.T."/>
            <person name="Vergez L.M."/>
            <person name="Ward B.B."/>
        </authorList>
    </citation>
    <scope>NUCLEOTIDE SEQUENCE [LARGE SCALE GENOMIC DNA]</scope>
    <source>
        <strain>ATCC 19707 / BCRC 17464 / JCM 30415 / NCIMB 11848 / C-107</strain>
    </source>
</reference>
<accession>Q3J6V9</accession>
<keyword id="KW-0028">Amino-acid biosynthesis</keyword>
<keyword id="KW-0055">Arginine biosynthesis</keyword>
<keyword id="KW-0067">ATP-binding</keyword>
<keyword id="KW-0963">Cytoplasm</keyword>
<keyword id="KW-0418">Kinase</keyword>
<keyword id="KW-0547">Nucleotide-binding</keyword>
<keyword id="KW-1185">Reference proteome</keyword>
<keyword id="KW-0808">Transferase</keyword>
<comment type="function">
    <text evidence="1">Catalyzes the ATP-dependent phosphorylation of N-acetyl-L-glutamate.</text>
</comment>
<comment type="catalytic activity">
    <reaction evidence="1">
        <text>N-acetyl-L-glutamate + ATP = N-acetyl-L-glutamyl 5-phosphate + ADP</text>
        <dbReference type="Rhea" id="RHEA:14629"/>
        <dbReference type="ChEBI" id="CHEBI:30616"/>
        <dbReference type="ChEBI" id="CHEBI:44337"/>
        <dbReference type="ChEBI" id="CHEBI:57936"/>
        <dbReference type="ChEBI" id="CHEBI:456216"/>
        <dbReference type="EC" id="2.7.2.8"/>
    </reaction>
</comment>
<comment type="pathway">
    <text evidence="1">Amino-acid biosynthesis; L-arginine biosynthesis; N(2)-acetyl-L-ornithine from L-glutamate: step 2/4.</text>
</comment>
<comment type="subcellular location">
    <subcellularLocation>
        <location evidence="1">Cytoplasm</location>
    </subcellularLocation>
</comment>
<comment type="similarity">
    <text evidence="1">Belongs to the acetylglutamate kinase family. ArgB subfamily.</text>
</comment>
<sequence length="301" mass="32479">MTLTVDHAMNIAQVLTESLPYIQRFAGKTVVIKYGGNAMVDDDLKNSFSRDVVLMKLVGINPVVIHGGGPQIGRLLERVGKQSEFIQGMRVTDKETMDIVEMVLSGQVNKEIVNLINRHGGHAVGLTGKDGTLIHAEKLHLTQDRDDPTINIPEIIDMGHVGKVKQINTRIVDLLVQSDFIPVIAPIGVGENGQSYNINADLVAGKLAEALGAEKLILLTNTPGLLDKEGKLLTGLNAEQVQSLIADGTISDGMLPKIQCALEAVHAGVRSAHILDGRVEHAVILELFTDEGIGTLIRNRH</sequence>